<evidence type="ECO:0000255" key="1">
    <source>
        <dbReference type="HAMAP-Rule" id="MF_01088"/>
    </source>
</evidence>
<keyword id="KW-0997">Cell inner membrane</keyword>
<keyword id="KW-1003">Cell membrane</keyword>
<keyword id="KW-0472">Membrane</keyword>
<keyword id="KW-0812">Transmembrane</keyword>
<keyword id="KW-1133">Transmembrane helix</keyword>
<feature type="chain" id="PRO_1000064887" description="Universal stress protein B">
    <location>
        <begin position="1"/>
        <end position="111"/>
    </location>
</feature>
<feature type="transmembrane region" description="Helical" evidence="1">
    <location>
        <begin position="1"/>
        <end position="21"/>
    </location>
</feature>
<feature type="transmembrane region" description="Helical" evidence="1">
    <location>
        <begin position="90"/>
        <end position="110"/>
    </location>
</feature>
<dbReference type="EMBL" id="CP000305">
    <property type="protein sequence ID" value="ABG19945.1"/>
    <property type="molecule type" value="Genomic_DNA"/>
</dbReference>
<dbReference type="EMBL" id="ACNQ01000019">
    <property type="protein sequence ID" value="EEO74512.1"/>
    <property type="molecule type" value="Genomic_DNA"/>
</dbReference>
<dbReference type="RefSeq" id="WP_002209527.1">
    <property type="nucleotide sequence ID" value="NZ_ACNQ01000019.1"/>
</dbReference>
<dbReference type="GeneID" id="96663308"/>
<dbReference type="KEGG" id="ypn:YPN_3618"/>
<dbReference type="HOGENOM" id="CLU_151816_0_0_6"/>
<dbReference type="Proteomes" id="UP000008936">
    <property type="component" value="Chromosome"/>
</dbReference>
<dbReference type="GO" id="GO:0005886">
    <property type="term" value="C:plasma membrane"/>
    <property type="evidence" value="ECO:0007669"/>
    <property type="project" value="UniProtKB-SubCell"/>
</dbReference>
<dbReference type="HAMAP" id="MF_01088">
    <property type="entry name" value="UspB"/>
    <property type="match status" value="1"/>
</dbReference>
<dbReference type="InterPro" id="IPR019598">
    <property type="entry name" value="Universal_stress_protein_B"/>
</dbReference>
<dbReference type="NCBIfam" id="NF003435">
    <property type="entry name" value="PRK04960.1"/>
    <property type="match status" value="1"/>
</dbReference>
<dbReference type="Pfam" id="PF10625">
    <property type="entry name" value="UspB"/>
    <property type="match status" value="1"/>
</dbReference>
<comment type="subcellular location">
    <subcellularLocation>
        <location evidence="1">Cell inner membrane</location>
        <topology evidence="1">Multi-pass membrane protein</topology>
    </subcellularLocation>
</comment>
<comment type="similarity">
    <text evidence="1">Belongs to the universal stress protein B family.</text>
</comment>
<name>USPB_YERPN</name>
<protein>
    <recommendedName>
        <fullName evidence="1">Universal stress protein B</fullName>
    </recommendedName>
</protein>
<reference key="1">
    <citation type="journal article" date="2006" name="J. Bacteriol.">
        <title>Complete genome sequence of Yersinia pestis strains Antiqua and Nepal516: evidence of gene reduction in an emerging pathogen.</title>
        <authorList>
            <person name="Chain P.S.G."/>
            <person name="Hu P."/>
            <person name="Malfatti S.A."/>
            <person name="Radnedge L."/>
            <person name="Larimer F."/>
            <person name="Vergez L.M."/>
            <person name="Worsham P."/>
            <person name="Chu M.C."/>
            <person name="Andersen G.L."/>
        </authorList>
    </citation>
    <scope>NUCLEOTIDE SEQUENCE [LARGE SCALE GENOMIC DNA]</scope>
    <source>
        <strain>Nepal516</strain>
    </source>
</reference>
<reference key="2">
    <citation type="submission" date="2009-04" db="EMBL/GenBank/DDBJ databases">
        <title>Yersinia pestis Nepal516A whole genome shotgun sequencing project.</title>
        <authorList>
            <person name="Plunkett G. III"/>
            <person name="Anderson B.D."/>
            <person name="Baumler D.J."/>
            <person name="Burland V."/>
            <person name="Cabot E.L."/>
            <person name="Glasner J.D."/>
            <person name="Mau B."/>
            <person name="Neeno-Eckwall E."/>
            <person name="Perna N.T."/>
            <person name="Munk A.C."/>
            <person name="Tapia R."/>
            <person name="Green L.D."/>
            <person name="Rogers Y.C."/>
            <person name="Detter J.C."/>
            <person name="Bruce D.C."/>
            <person name="Brettin T.S."/>
        </authorList>
    </citation>
    <scope>NUCLEOTIDE SEQUENCE [LARGE SCALE GENOMIC DNA]</scope>
    <source>
        <strain>Nepal516</strain>
    </source>
</reference>
<accession>Q1CDI5</accession>
<accession>D1Q1V9</accession>
<gene>
    <name evidence="1" type="primary">uspB</name>
    <name type="ordered locus">YPN_3618</name>
    <name type="ORF">YP516_4111</name>
</gene>
<proteinExistence type="inferred from homology"/>
<organism>
    <name type="scientific">Yersinia pestis bv. Antiqua (strain Nepal516)</name>
    <dbReference type="NCBI Taxonomy" id="377628"/>
    <lineage>
        <taxon>Bacteria</taxon>
        <taxon>Pseudomonadati</taxon>
        <taxon>Pseudomonadota</taxon>
        <taxon>Gammaproteobacteria</taxon>
        <taxon>Enterobacterales</taxon>
        <taxon>Yersiniaceae</taxon>
        <taxon>Yersinia</taxon>
    </lineage>
</organism>
<sequence>MISTVALFWALCVVCVVNMARYYSSLRALLVVLRGCDPLLYQYVDGGGFFTSHGQPSKQIRLVGYIFAQRYLDHHDPEFIRRCERLRGQFILTSALCGLVVVSLVALMLWY</sequence>